<feature type="chain" id="PRO_0000401099" description="Insecticidal protein LA-a">
    <location>
        <begin position="1"/>
        <end position="13" status="greater than"/>
    </location>
</feature>
<feature type="domain" description="Chitin-binding type-1" evidence="1">
    <location>
        <begin position="3"/>
        <end position="13" status="greater than"/>
    </location>
</feature>
<feature type="non-terminal residue" evidence="3">
    <location>
        <position position="13"/>
    </location>
</feature>
<accession>P86799</accession>
<organism>
    <name type="scientific">Morus alba</name>
    <name type="common">White mulberry</name>
    <dbReference type="NCBI Taxonomy" id="3498"/>
    <lineage>
        <taxon>Eukaryota</taxon>
        <taxon>Viridiplantae</taxon>
        <taxon>Streptophyta</taxon>
        <taxon>Embryophyta</taxon>
        <taxon>Tracheophyta</taxon>
        <taxon>Spermatophyta</taxon>
        <taxon>Magnoliopsida</taxon>
        <taxon>eudicotyledons</taxon>
        <taxon>Gunneridae</taxon>
        <taxon>Pentapetalae</taxon>
        <taxon>rosids</taxon>
        <taxon>fabids</taxon>
        <taxon>Rosales</taxon>
        <taxon>Moraceae</taxon>
        <taxon>Moreae</taxon>
        <taxon>Morus</taxon>
    </lineage>
</organism>
<dbReference type="EC" id="3.2.1.132"/>
<dbReference type="EC" id="3.2.1.14"/>
<dbReference type="GO" id="GO:0005576">
    <property type="term" value="C:extracellular region"/>
    <property type="evidence" value="ECO:0000314"/>
    <property type="project" value="UniProtKB"/>
</dbReference>
<dbReference type="GO" id="GO:0008061">
    <property type="term" value="F:chitin binding"/>
    <property type="evidence" value="ECO:0007669"/>
    <property type="project" value="UniProtKB-KW"/>
</dbReference>
<dbReference type="GO" id="GO:0004568">
    <property type="term" value="F:chitinase activity"/>
    <property type="evidence" value="ECO:0000314"/>
    <property type="project" value="UniProtKB"/>
</dbReference>
<dbReference type="GO" id="GO:0016977">
    <property type="term" value="F:chitosanase activity"/>
    <property type="evidence" value="ECO:0007669"/>
    <property type="project" value="UniProtKB-EC"/>
</dbReference>
<dbReference type="GO" id="GO:0008843">
    <property type="term" value="F:endochitinase activity"/>
    <property type="evidence" value="ECO:0007669"/>
    <property type="project" value="UniProtKB-EC"/>
</dbReference>
<dbReference type="GO" id="GO:0006032">
    <property type="term" value="P:chitin catabolic process"/>
    <property type="evidence" value="ECO:0000314"/>
    <property type="project" value="UniProtKB"/>
</dbReference>
<dbReference type="GO" id="GO:0002213">
    <property type="term" value="P:defense response to insect"/>
    <property type="evidence" value="ECO:0000314"/>
    <property type="project" value="UniProtKB"/>
</dbReference>
<dbReference type="GO" id="GO:0000272">
    <property type="term" value="P:polysaccharide catabolic process"/>
    <property type="evidence" value="ECO:0007669"/>
    <property type="project" value="UniProtKB-KW"/>
</dbReference>
<name>IPLAA_MORAL</name>
<keyword id="KW-0119">Carbohydrate metabolism</keyword>
<keyword id="KW-0146">Chitin degradation</keyword>
<keyword id="KW-0147">Chitin-binding</keyword>
<keyword id="KW-0903">Direct protein sequencing</keyword>
<keyword id="KW-0325">Glycoprotein</keyword>
<keyword id="KW-0326">Glycosidase</keyword>
<keyword id="KW-0378">Hydrolase</keyword>
<keyword id="KW-0611">Plant defense</keyword>
<keyword id="KW-0624">Polysaccharide degradation</keyword>
<keyword id="KW-0964">Secreted</keyword>
<comment type="function">
    <text evidence="2">Has insecticidal activity when consumed by D.melanogaster larvae. Has low chitinase and chitosanase activity.</text>
</comment>
<comment type="catalytic activity">
    <reaction evidence="2">
        <text>Random endo-hydrolysis of N-acetyl-beta-D-glucosaminide (1-&gt;4)-beta-linkages in chitin and chitodextrins.</text>
        <dbReference type="EC" id="3.2.1.14"/>
    </reaction>
</comment>
<comment type="catalytic activity">
    <reaction evidence="2">
        <text>Endohydrolysis of beta-(1-&gt;4)-linkages between D-glucosamine residues in a partly acetylated chitosan.</text>
        <dbReference type="EC" id="3.2.1.132"/>
    </reaction>
</comment>
<comment type="subcellular location">
    <subcellularLocation>
        <location evidence="2">Secreted</location>
    </subcellularLocation>
</comment>
<comment type="PTM">
    <text evidence="2">Glycosylated; contains galactose.</text>
</comment>
<reference evidence="4" key="1">
    <citation type="journal article" date="2010" name="BMC Biochem.">
        <title>Two chitinase-like proteins abundantly accumulated in latex of mulberry show insecticidal activity.</title>
        <authorList>
            <person name="Kitajima S."/>
            <person name="Kamei K."/>
            <person name="Taketani S."/>
            <person name="Yamaguchi M."/>
            <person name="Kawai F."/>
            <person name="Komatsu A."/>
            <person name="Inukai Y."/>
        </authorList>
    </citation>
    <scope>PROTEIN SEQUENCE</scope>
    <scope>FUNCTION</scope>
    <scope>CATALYTIC ACTIVITY</scope>
    <scope>SUBCELLULAR LOCATION</scope>
    <scope>GLYCOSYLATION</scope>
    <source>
        <strain evidence="2">cv. Minamisakari</strain>
        <tissue evidence="2">Latex</tissue>
    </source>
</reference>
<reference key="2">
    <citation type="submission" date="2011-08" db="UniProtKB">
        <authorList>
            <person name="Kitajima S."/>
        </authorList>
    </citation>
    <scope>SEQUENCE REVISION TO 1</scope>
</reference>
<protein>
    <recommendedName>
        <fullName evidence="3">Insecticidal protein LA-a</fullName>
        <ecNumber>3.2.1.132</ecNumber>
        <ecNumber>3.2.1.14</ecNumber>
    </recommendedName>
    <alternativeName>
        <fullName evidence="3">Latex abundant protein a</fullName>
    </alternativeName>
</protein>
<proteinExistence type="evidence at protein level"/>
<sequence length="13" mass="1269">SEPQXGRDAGGAL</sequence>
<evidence type="ECO:0000255" key="1">
    <source>
        <dbReference type="PROSITE-ProRule" id="PRU00261"/>
    </source>
</evidence>
<evidence type="ECO:0000269" key="2">
    <source>
    </source>
</evidence>
<evidence type="ECO:0000303" key="3">
    <source>
    </source>
</evidence>
<evidence type="ECO:0000305" key="4"/>